<reference key="1">
    <citation type="journal article" date="2005" name="Plant Physiol.">
        <title>Iron-sulfur cluster biogenesis in chloroplasts. Involvement of the scaffold protein CpIscA.</title>
        <authorList>
            <person name="Abdel-Ghany S.E."/>
            <person name="Ye H."/>
            <person name="Garifullina G.F."/>
            <person name="Zhang L."/>
            <person name="Pilon-Smits E.A.H."/>
            <person name="Pilon M."/>
        </authorList>
    </citation>
    <scope>NUCLEOTIDE SEQUENCE [MRNA]</scope>
    <scope>SUBCELLULAR LOCATION</scope>
    <scope>TISSUE SPECIFICITY</scope>
    <scope>FUNCTION</scope>
</reference>
<reference key="2">
    <citation type="journal article" date="2000" name="Nature">
        <title>Sequence and analysis of chromosome 1 of the plant Arabidopsis thaliana.</title>
        <authorList>
            <person name="Theologis A."/>
            <person name="Ecker J.R."/>
            <person name="Palm C.J."/>
            <person name="Federspiel N.A."/>
            <person name="Kaul S."/>
            <person name="White O."/>
            <person name="Alonso J."/>
            <person name="Altafi H."/>
            <person name="Araujo R."/>
            <person name="Bowman C.L."/>
            <person name="Brooks S.Y."/>
            <person name="Buehler E."/>
            <person name="Chan A."/>
            <person name="Chao Q."/>
            <person name="Chen H."/>
            <person name="Cheuk R.F."/>
            <person name="Chin C.W."/>
            <person name="Chung M.K."/>
            <person name="Conn L."/>
            <person name="Conway A.B."/>
            <person name="Conway A.R."/>
            <person name="Creasy T.H."/>
            <person name="Dewar K."/>
            <person name="Dunn P."/>
            <person name="Etgu P."/>
            <person name="Feldblyum T.V."/>
            <person name="Feng J.-D."/>
            <person name="Fong B."/>
            <person name="Fujii C.Y."/>
            <person name="Gill J.E."/>
            <person name="Goldsmith A.D."/>
            <person name="Haas B."/>
            <person name="Hansen N.F."/>
            <person name="Hughes B."/>
            <person name="Huizar L."/>
            <person name="Hunter J.L."/>
            <person name="Jenkins J."/>
            <person name="Johnson-Hopson C."/>
            <person name="Khan S."/>
            <person name="Khaykin E."/>
            <person name="Kim C.J."/>
            <person name="Koo H.L."/>
            <person name="Kremenetskaia I."/>
            <person name="Kurtz D.B."/>
            <person name="Kwan A."/>
            <person name="Lam B."/>
            <person name="Langin-Hooper S."/>
            <person name="Lee A."/>
            <person name="Lee J.M."/>
            <person name="Lenz C.A."/>
            <person name="Li J.H."/>
            <person name="Li Y.-P."/>
            <person name="Lin X."/>
            <person name="Liu S.X."/>
            <person name="Liu Z.A."/>
            <person name="Luros J.S."/>
            <person name="Maiti R."/>
            <person name="Marziali A."/>
            <person name="Militscher J."/>
            <person name="Miranda M."/>
            <person name="Nguyen M."/>
            <person name="Nierman W.C."/>
            <person name="Osborne B.I."/>
            <person name="Pai G."/>
            <person name="Peterson J."/>
            <person name="Pham P.K."/>
            <person name="Rizzo M."/>
            <person name="Rooney T."/>
            <person name="Rowley D."/>
            <person name="Sakano H."/>
            <person name="Salzberg S.L."/>
            <person name="Schwartz J.R."/>
            <person name="Shinn P."/>
            <person name="Southwick A.M."/>
            <person name="Sun H."/>
            <person name="Tallon L.J."/>
            <person name="Tambunga G."/>
            <person name="Toriumi M.J."/>
            <person name="Town C.D."/>
            <person name="Utterback T."/>
            <person name="Van Aken S."/>
            <person name="Vaysberg M."/>
            <person name="Vysotskaia V.S."/>
            <person name="Walker M."/>
            <person name="Wu D."/>
            <person name="Yu G."/>
            <person name="Fraser C.M."/>
            <person name="Venter J.C."/>
            <person name="Davis R.W."/>
        </authorList>
    </citation>
    <scope>NUCLEOTIDE SEQUENCE [LARGE SCALE GENOMIC DNA]</scope>
    <source>
        <strain>cv. Columbia</strain>
    </source>
</reference>
<reference key="3">
    <citation type="journal article" date="2017" name="Plant J.">
        <title>Araport11: a complete reannotation of the Arabidopsis thaliana reference genome.</title>
        <authorList>
            <person name="Cheng C.Y."/>
            <person name="Krishnakumar V."/>
            <person name="Chan A.P."/>
            <person name="Thibaud-Nissen F."/>
            <person name="Schobel S."/>
            <person name="Town C.D."/>
        </authorList>
    </citation>
    <scope>GENOME REANNOTATION</scope>
    <source>
        <strain>cv. Columbia</strain>
    </source>
</reference>
<reference key="4">
    <citation type="submission" date="2004-03" db="EMBL/GenBank/DDBJ databases">
        <title>Arabidopsis cDNA clones.</title>
        <authorList>
            <person name="Shinn P."/>
            <person name="Chen H."/>
            <person name="Cheuk R.F."/>
            <person name="Kim C.J."/>
            <person name="Ecker J.R."/>
        </authorList>
    </citation>
    <scope>NUCLEOTIDE SEQUENCE [LARGE SCALE MRNA]</scope>
    <source>
        <strain>cv. Columbia</strain>
    </source>
</reference>
<protein>
    <recommendedName>
        <fullName>Iron-sulfur assembly protein IscA, chloroplastic</fullName>
    </recommendedName>
    <alternativeName>
        <fullName>Plastid SufA-like protein</fullName>
    </alternativeName>
    <alternativeName>
        <fullName>Protein scaffold protein AtCpIscA</fullName>
    </alternativeName>
</protein>
<gene>
    <name type="primary">ISCA</name>
    <name type="ordered locus">At1g10500</name>
    <name type="ORF">T10O24.11</name>
</gene>
<evidence type="ECO:0000250" key="1"/>
<evidence type="ECO:0000250" key="2">
    <source>
        <dbReference type="UniProtKB" id="P0AAC8"/>
    </source>
</evidence>
<evidence type="ECO:0000255" key="3"/>
<evidence type="ECO:0000269" key="4">
    <source>
    </source>
</evidence>
<evidence type="ECO:0000305" key="5"/>
<keyword id="KW-0150">Chloroplast</keyword>
<keyword id="KW-0408">Iron</keyword>
<keyword id="KW-0411">Iron-sulfur</keyword>
<keyword id="KW-0479">Metal-binding</keyword>
<keyword id="KW-0934">Plastid</keyword>
<keyword id="KW-1185">Reference proteome</keyword>
<keyword id="KW-0809">Transit peptide</keyword>
<feature type="transit peptide" description="Chloroplast" evidence="3">
    <location>
        <begin position="1"/>
        <end position="55"/>
    </location>
</feature>
<feature type="chain" id="PRO_0000077033" description="Iron-sulfur assembly protein IscA, chloroplastic">
    <location>
        <begin position="56"/>
        <end position="180"/>
    </location>
</feature>
<feature type="binding site" evidence="2">
    <location>
        <position position="104"/>
    </location>
    <ligand>
        <name>Fe cation</name>
        <dbReference type="ChEBI" id="CHEBI:24875"/>
    </ligand>
</feature>
<feature type="binding site" evidence="2">
    <location>
        <position position="170"/>
    </location>
    <ligand>
        <name>Fe cation</name>
        <dbReference type="ChEBI" id="CHEBI:24875"/>
    </ligand>
</feature>
<feature type="binding site" evidence="2">
    <location>
        <position position="172"/>
    </location>
    <ligand>
        <name>Fe cation</name>
        <dbReference type="ChEBI" id="CHEBI:24875"/>
    </ligand>
</feature>
<name>ISCAP_ARATH</name>
<proteinExistence type="evidence at transcript level"/>
<organism>
    <name type="scientific">Arabidopsis thaliana</name>
    <name type="common">Mouse-ear cress</name>
    <dbReference type="NCBI Taxonomy" id="3702"/>
    <lineage>
        <taxon>Eukaryota</taxon>
        <taxon>Viridiplantae</taxon>
        <taxon>Streptophyta</taxon>
        <taxon>Embryophyta</taxon>
        <taxon>Tracheophyta</taxon>
        <taxon>Spermatophyta</taxon>
        <taxon>Magnoliopsida</taxon>
        <taxon>eudicotyledons</taxon>
        <taxon>Gunneridae</taxon>
        <taxon>Pentapetalae</taxon>
        <taxon>rosids</taxon>
        <taxon>malvids</taxon>
        <taxon>Brassicales</taxon>
        <taxon>Brassicaceae</taxon>
        <taxon>Camelineae</taxon>
        <taxon>Arabidopsis</taxon>
    </lineage>
</organism>
<comment type="function">
    <text evidence="4">Involved in the assembly of chloroplastic iron-sulfur proteins. Is able to transfer iron-sulfur clusters to apo-ferredoxin.</text>
</comment>
<comment type="cofactor">
    <cofactor evidence="1">
        <name>Fe cation</name>
        <dbReference type="ChEBI" id="CHEBI:24875"/>
    </cofactor>
    <text evidence="1">Binds 2 iron ions per dimer. The dimer may bind additional iron ions.</text>
</comment>
<comment type="subunit">
    <text evidence="1">Homodimer; may form tetramers and higher multimers.</text>
</comment>
<comment type="subcellular location">
    <subcellularLocation>
        <location evidence="4">Plastid</location>
        <location evidence="4">Chloroplast stroma</location>
    </subcellularLocation>
</comment>
<comment type="tissue specificity">
    <text evidence="4">Ubiquitous with higher expression level in green, photosynthetic tissues.</text>
</comment>
<comment type="similarity">
    <text evidence="5">Belongs to the HesB/IscA family. Ycf83 subfamily.</text>
</comment>
<comment type="sequence caution" evidence="5">
    <conflict type="erroneous gene model prediction">
        <sequence resource="EMBL-CDS" id="AAD39571"/>
    </conflict>
</comment>
<accession>Q9XIK3</accession>
<accession>Q6NM99</accession>
<sequence length="180" mass="19337">MAFATGITTSSNPTFLGLKISNTSLRSVVSCNSISFPSLSYVNLNLNRRNRLSVRSASVPAAPAMEGLKPAISLSENALKHLSKMRSERGEDLCLRIGVKQGGCSGMSYTMDFENRANARPDDSTIEYQGFTIVCDPKSMLFLFGMQLDYSDALIGGGFSFSNPNATQTCGCGKSFAAEM</sequence>
<dbReference type="EMBL" id="AY971959">
    <property type="protein sequence ID" value="AAY40769.1"/>
    <property type="molecule type" value="mRNA"/>
</dbReference>
<dbReference type="EMBL" id="AC007067">
    <property type="protein sequence ID" value="AAD39571.1"/>
    <property type="status" value="ALT_SEQ"/>
    <property type="molecule type" value="Genomic_DNA"/>
</dbReference>
<dbReference type="EMBL" id="CP002684">
    <property type="protein sequence ID" value="AEE28586.1"/>
    <property type="molecule type" value="Genomic_DNA"/>
</dbReference>
<dbReference type="EMBL" id="BT010894">
    <property type="protein sequence ID" value="AAR24672.1"/>
    <property type="molecule type" value="mRNA"/>
</dbReference>
<dbReference type="EMBL" id="BT011763">
    <property type="protein sequence ID" value="AAS65934.1"/>
    <property type="molecule type" value="mRNA"/>
</dbReference>
<dbReference type="PIR" id="F86238">
    <property type="entry name" value="F86238"/>
</dbReference>
<dbReference type="SMR" id="Q9XIK3"/>
<dbReference type="FunCoup" id="Q9XIK3">
    <property type="interactions" value="143"/>
</dbReference>
<dbReference type="STRING" id="3702.Q9XIK3"/>
<dbReference type="PaxDb" id="3702-AT1G10500.1"/>
<dbReference type="ProteomicsDB" id="247134"/>
<dbReference type="EnsemblPlants" id="AT1G10500.1">
    <property type="protein sequence ID" value="AT1G10500.1"/>
    <property type="gene ID" value="AT1G10500"/>
</dbReference>
<dbReference type="GeneID" id="837590"/>
<dbReference type="Gramene" id="AT1G10500.1">
    <property type="protein sequence ID" value="AT1G10500.1"/>
    <property type="gene ID" value="AT1G10500"/>
</dbReference>
<dbReference type="KEGG" id="ath:AT1G10500"/>
<dbReference type="Araport" id="AT1G10500"/>
<dbReference type="TAIR" id="AT1G10500">
    <property type="gene designation" value="CPISCA"/>
</dbReference>
<dbReference type="eggNOG" id="KOG1120">
    <property type="taxonomic scope" value="Eukaryota"/>
</dbReference>
<dbReference type="HOGENOM" id="CLU_069054_3_0_1"/>
<dbReference type="InParanoid" id="Q9XIK3"/>
<dbReference type="OMA" id="TDNALMH"/>
<dbReference type="OrthoDB" id="333486at2759"/>
<dbReference type="PhylomeDB" id="Q9XIK3"/>
<dbReference type="PRO" id="PR:Q9XIK3"/>
<dbReference type="Proteomes" id="UP000006548">
    <property type="component" value="Chromosome 1"/>
</dbReference>
<dbReference type="ExpressionAtlas" id="Q9XIK3">
    <property type="expression patterns" value="baseline and differential"/>
</dbReference>
<dbReference type="GO" id="GO:0009570">
    <property type="term" value="C:chloroplast stroma"/>
    <property type="evidence" value="ECO:0000314"/>
    <property type="project" value="TAIR"/>
</dbReference>
<dbReference type="GO" id="GO:0051536">
    <property type="term" value="F:iron-sulfur cluster binding"/>
    <property type="evidence" value="ECO:0007669"/>
    <property type="project" value="UniProtKB-KW"/>
</dbReference>
<dbReference type="GO" id="GO:0046872">
    <property type="term" value="F:metal ion binding"/>
    <property type="evidence" value="ECO:0007669"/>
    <property type="project" value="UniProtKB-KW"/>
</dbReference>
<dbReference type="GO" id="GO:0030674">
    <property type="term" value="F:protein-macromolecule adaptor activity"/>
    <property type="evidence" value="ECO:0000314"/>
    <property type="project" value="TAIR"/>
</dbReference>
<dbReference type="GO" id="GO:0016226">
    <property type="term" value="P:iron-sulfur cluster assembly"/>
    <property type="evidence" value="ECO:0000314"/>
    <property type="project" value="TAIR"/>
</dbReference>
<dbReference type="FunFam" id="2.60.300.12:FF:000008">
    <property type="entry name" value="iron-sulfur assembly protein IscA, chloroplastic"/>
    <property type="match status" value="1"/>
</dbReference>
<dbReference type="Gene3D" id="2.60.300.12">
    <property type="entry name" value="HesB-like domain"/>
    <property type="match status" value="1"/>
</dbReference>
<dbReference type="InterPro" id="IPR000361">
    <property type="entry name" value="FeS_biogenesis"/>
</dbReference>
<dbReference type="InterPro" id="IPR016092">
    <property type="entry name" value="FeS_cluster_insertion"/>
</dbReference>
<dbReference type="InterPro" id="IPR017870">
    <property type="entry name" value="FeS_cluster_insertion_CS"/>
</dbReference>
<dbReference type="InterPro" id="IPR035903">
    <property type="entry name" value="HesB-like_dom_sf"/>
</dbReference>
<dbReference type="InterPro" id="IPR031108">
    <property type="entry name" value="ISCA_plant_cyanobact"/>
</dbReference>
<dbReference type="NCBIfam" id="TIGR00049">
    <property type="entry name" value="iron-sulfur cluster assembly accessory protein"/>
    <property type="match status" value="1"/>
</dbReference>
<dbReference type="PANTHER" id="PTHR47265">
    <property type="entry name" value="IRON-SULFUR ASSEMBLY PROTEIN ISCA, CHLOROPLASTIC"/>
    <property type="match status" value="1"/>
</dbReference>
<dbReference type="PANTHER" id="PTHR47265:SF1">
    <property type="entry name" value="IRON-SULFUR ASSEMBLY PROTEIN ISCA, CHLOROPLASTIC"/>
    <property type="match status" value="1"/>
</dbReference>
<dbReference type="Pfam" id="PF01521">
    <property type="entry name" value="Fe-S_biosyn"/>
    <property type="match status" value="1"/>
</dbReference>
<dbReference type="SUPFAM" id="SSF89360">
    <property type="entry name" value="HesB-like domain"/>
    <property type="match status" value="1"/>
</dbReference>
<dbReference type="PROSITE" id="PS01152">
    <property type="entry name" value="HESB"/>
    <property type="match status" value="1"/>
</dbReference>